<gene>
    <name evidence="11" type="primary">ubql-1</name>
    <name evidence="11" type="ORF">F15C11.2</name>
</gene>
<accession>G5EFF7</accession>
<accession>G5EC78</accession>
<accession>G5EG66</accession>
<keyword id="KW-0025">Alternative splicing</keyword>
<keyword id="KW-0227">DNA damage</keyword>
<keyword id="KW-0234">DNA repair</keyword>
<keyword id="KW-1185">Reference proteome</keyword>
<keyword id="KW-0677">Repeat</keyword>
<feature type="chain" id="PRO_0000444369" description="Ubiquilin">
    <location>
        <begin position="1"/>
        <end position="502"/>
    </location>
</feature>
<feature type="domain" description="Ubiquitin-like" evidence="4">
    <location>
        <begin position="8"/>
        <end position="83"/>
    </location>
</feature>
<feature type="domain" description="STI1 1" evidence="2">
    <location>
        <begin position="124"/>
        <end position="157"/>
    </location>
</feature>
<feature type="domain" description="STI1 2" evidence="2">
    <location>
        <begin position="161"/>
        <end position="200"/>
    </location>
</feature>
<feature type="domain" description="STI1 3" evidence="2">
    <location>
        <begin position="289"/>
        <end position="327"/>
    </location>
</feature>
<feature type="domain" description="STI1 4" evidence="2">
    <location>
        <begin position="351"/>
        <end position="387"/>
    </location>
</feature>
<feature type="domain" description="UBA" evidence="3">
    <location>
        <begin position="455"/>
        <end position="501"/>
    </location>
</feature>
<feature type="region of interest" description="Disordered" evidence="5">
    <location>
        <begin position="84"/>
        <end position="136"/>
    </location>
</feature>
<feature type="region of interest" description="Disordered" evidence="5">
    <location>
        <begin position="235"/>
        <end position="294"/>
    </location>
</feature>
<feature type="compositionally biased region" description="Low complexity" evidence="5">
    <location>
        <begin position="84"/>
        <end position="115"/>
    </location>
</feature>
<feature type="compositionally biased region" description="Polar residues" evidence="5">
    <location>
        <begin position="235"/>
        <end position="251"/>
    </location>
</feature>
<feature type="compositionally biased region" description="Basic and acidic residues" evidence="5">
    <location>
        <begin position="252"/>
        <end position="262"/>
    </location>
</feature>
<feature type="compositionally biased region" description="Low complexity" evidence="5">
    <location>
        <begin position="274"/>
        <end position="290"/>
    </location>
</feature>
<feature type="splice variant" id="VSP_059588" description="In isoform b." evidence="9">
    <original>SSNPTPSSQPNPTNNPFAA</original>
    <variation>T</variation>
    <location>
        <begin position="100"/>
        <end position="118"/>
    </location>
</feature>
<feature type="splice variant" id="VSP_059589" description="In isoform c." evidence="9">
    <original>PSSTAA</original>
    <variation>VSILNI</variation>
    <location>
        <begin position="449"/>
        <end position="454"/>
    </location>
</feature>
<feature type="splice variant" id="VSP_059590" description="In isoform c." evidence="9">
    <location>
        <begin position="455"/>
        <end position="502"/>
    </location>
</feature>
<comment type="function">
    <text evidence="1 6 7 8">May play a role in the ER-associated protein degradation pathway (ERAD) possibly via its interaction with ER-localized proteins ubxn-4 and cdc-48.1 and/or cdc48.2, providing a link between the polyubiquitinated ERAD substrates and the proteasome (PubMed:19822669). Also plays an important role in the regulation of other protein degradation mechanisms and pathways including ubiquitin-proteasome system (UPS) and autophagy (By similarity). Mediates the proteasomal targeting of misfolded or accumulated proteins for degradation by binding (via UBA domain) to their polyubiquitin chains and by interacting (via ubiquitin-like domain) with the subunits of the proteasome (By similarity). Collaborates with POST (F36D4.5) in the export of ubiquitinated proteins from the nucleus to the cytoplasm (PubMed:29666234). Also acts as a regulator of DNA repair by inhibiting homologous recombination repair, thereby redirecting double-strand break repair toward non-homologous end joining (NHEJ) (PubMed:30612738).</text>
</comment>
<comment type="alternative products">
    <event type="alternative splicing"/>
    <isoform>
        <id>G5EFF7-1</id>
        <name evidence="11">a</name>
        <sequence type="displayed"/>
    </isoform>
    <isoform>
        <id>G5EFF7-2</id>
        <name evidence="12">b</name>
        <sequence type="described" ref="VSP_059588"/>
    </isoform>
    <isoform>
        <id>G5EFF7-3</id>
        <name evidence="13">c</name>
        <sequence type="described" ref="VSP_059589 VSP_059590"/>
    </isoform>
</comment>
<comment type="tissue specificity">
    <text evidence="6 7">Expressed in the pharynx, hypodermis, intestine and head neurons (PubMed:29666234). Upon ER stress, expressed predominantly in pharyngeal muscle, hypodermis and intestine (PubMed:19822669).</text>
</comment>
<comment type="induction">
    <text evidence="6">Induced upon ER stress.</text>
</comment>
<comment type="disruption phenotype">
    <text evidence="6 7 8">RNAi-mediated knockdown causes a reduction in lifespan (PubMed:19822669). Induces ER stress characterized by the expression of hsp-4, the accumulation of ubiquitinated proteins and an increase in ubxn-4 expression (PubMed:19822669). Mutants display increased homologous recombination repair in response to DNA damage compared to wild-type worms (PubMed:30612738). Worms lacking both POST (F36D4.5) and ubql-1 have a shorter lifespan and display an accumulation of ubiquitinated proteins in the nucleus (PubMed:29666234).</text>
</comment>
<proteinExistence type="evidence at transcript level"/>
<dbReference type="EMBL" id="BX284601">
    <property type="protein sequence ID" value="CAA95799.1"/>
    <property type="molecule type" value="Genomic_DNA"/>
</dbReference>
<dbReference type="EMBL" id="BX284601">
    <property type="protein sequence ID" value="CAD44115.1"/>
    <property type="molecule type" value="Genomic_DNA"/>
</dbReference>
<dbReference type="EMBL" id="BX284601">
    <property type="protein sequence ID" value="CAD44116.1"/>
    <property type="molecule type" value="Genomic_DNA"/>
</dbReference>
<dbReference type="PIR" id="T18584">
    <property type="entry name" value="T18584"/>
</dbReference>
<dbReference type="RefSeq" id="NP_740883.1">
    <molecule id="G5EFF7-1"/>
    <property type="nucleotide sequence ID" value="NM_170894.5"/>
</dbReference>
<dbReference type="RefSeq" id="NP_740884.1">
    <molecule id="G5EFF7-2"/>
    <property type="nucleotide sequence ID" value="NM_171839.4"/>
</dbReference>
<dbReference type="RefSeq" id="NP_740885.1">
    <molecule id="G5EFF7-3"/>
    <property type="nucleotide sequence ID" value="NM_170895.6"/>
</dbReference>
<dbReference type="SMR" id="G5EFF7"/>
<dbReference type="FunCoup" id="G5EFF7">
    <property type="interactions" value="3077"/>
</dbReference>
<dbReference type="IntAct" id="G5EFF7">
    <property type="interactions" value="4"/>
</dbReference>
<dbReference type="STRING" id="6239.F15C11.2a.1"/>
<dbReference type="PaxDb" id="6239-F15C11.2a"/>
<dbReference type="EnsemblMetazoa" id="F15C11.2a.1">
    <molecule id="G5EFF7-1"/>
    <property type="protein sequence ID" value="F15C11.2a.1"/>
    <property type="gene ID" value="WBGene00008852"/>
</dbReference>
<dbReference type="EnsemblMetazoa" id="F15C11.2b.1">
    <molecule id="G5EFF7-2"/>
    <property type="protein sequence ID" value="F15C11.2b.1"/>
    <property type="gene ID" value="WBGene00008852"/>
</dbReference>
<dbReference type="EnsemblMetazoa" id="F15C11.2c.1">
    <molecule id="G5EFF7-3"/>
    <property type="protein sequence ID" value="F15C11.2c.1"/>
    <property type="gene ID" value="WBGene00008852"/>
</dbReference>
<dbReference type="GeneID" id="172434"/>
<dbReference type="KEGG" id="cel:CELE_F15C11.2"/>
<dbReference type="AGR" id="WB:WBGene00008852"/>
<dbReference type="CTD" id="172434"/>
<dbReference type="WormBase" id="F15C11.2a">
    <molecule id="G5EFF7-1"/>
    <property type="protein sequence ID" value="CE09413"/>
    <property type="gene ID" value="WBGene00008852"/>
    <property type="gene designation" value="ubql-1"/>
</dbReference>
<dbReference type="WormBase" id="F15C11.2b">
    <molecule id="G5EFF7-2"/>
    <property type="protein sequence ID" value="CE31479"/>
    <property type="gene ID" value="WBGene00008852"/>
    <property type="gene designation" value="ubql-1"/>
</dbReference>
<dbReference type="WormBase" id="F15C11.2c">
    <molecule id="G5EFF7-3"/>
    <property type="protein sequence ID" value="CE31480"/>
    <property type="gene ID" value="WBGene00008852"/>
    <property type="gene designation" value="ubql-1"/>
</dbReference>
<dbReference type="eggNOG" id="KOG0010">
    <property type="taxonomic scope" value="Eukaryota"/>
</dbReference>
<dbReference type="GeneTree" id="ENSGT00940000156437"/>
<dbReference type="HOGENOM" id="CLU_024293_4_0_1"/>
<dbReference type="InParanoid" id="G5EFF7"/>
<dbReference type="OMA" id="MDNPITQ"/>
<dbReference type="OrthoDB" id="9450922at2759"/>
<dbReference type="PhylomeDB" id="G5EFF7"/>
<dbReference type="Reactome" id="R-CEL-8856825">
    <property type="pathway name" value="Cargo recognition for clathrin-mediated endocytosis"/>
</dbReference>
<dbReference type="SignaLink" id="G5EFF7"/>
<dbReference type="PRO" id="PR:G5EFF7"/>
<dbReference type="Proteomes" id="UP000001940">
    <property type="component" value="Chromosome I"/>
</dbReference>
<dbReference type="Bgee" id="WBGene00008852">
    <property type="expression patterns" value="Expressed in pharyngeal muscle cell (C elegans) and 4 other cell types or tissues"/>
</dbReference>
<dbReference type="GO" id="GO:0005829">
    <property type="term" value="C:cytosol"/>
    <property type="evidence" value="ECO:0000318"/>
    <property type="project" value="GO_Central"/>
</dbReference>
<dbReference type="GO" id="GO:0003684">
    <property type="term" value="F:damaged DNA binding"/>
    <property type="evidence" value="ECO:0007669"/>
    <property type="project" value="InterPro"/>
</dbReference>
<dbReference type="GO" id="GO:0031593">
    <property type="term" value="F:polyubiquitin modification-dependent protein binding"/>
    <property type="evidence" value="ECO:0000318"/>
    <property type="project" value="GO_Central"/>
</dbReference>
<dbReference type="GO" id="GO:0036503">
    <property type="term" value="P:ERAD pathway"/>
    <property type="evidence" value="ECO:0000315"/>
    <property type="project" value="UniProtKB"/>
</dbReference>
<dbReference type="GO" id="GO:2000042">
    <property type="term" value="P:negative regulation of double-strand break repair via homologous recombination"/>
    <property type="evidence" value="ECO:0000315"/>
    <property type="project" value="UniProtKB"/>
</dbReference>
<dbReference type="GO" id="GO:0006289">
    <property type="term" value="P:nucleotide-excision repair"/>
    <property type="evidence" value="ECO:0007669"/>
    <property type="project" value="InterPro"/>
</dbReference>
<dbReference type="GO" id="GO:0043161">
    <property type="term" value="P:proteasome-mediated ubiquitin-dependent protein catabolic process"/>
    <property type="evidence" value="ECO:0007669"/>
    <property type="project" value="InterPro"/>
</dbReference>
<dbReference type="GO" id="GO:0006611">
    <property type="term" value="P:protein export from nucleus"/>
    <property type="evidence" value="ECO:0000316"/>
    <property type="project" value="UniProtKB"/>
</dbReference>
<dbReference type="GO" id="GO:0006511">
    <property type="term" value="P:ubiquitin-dependent protein catabolic process"/>
    <property type="evidence" value="ECO:0000318"/>
    <property type="project" value="GO_Central"/>
</dbReference>
<dbReference type="CDD" id="cd14399">
    <property type="entry name" value="UBA_PLICs"/>
    <property type="match status" value="1"/>
</dbReference>
<dbReference type="CDD" id="cd16106">
    <property type="entry name" value="Ubl_Dsk2p_like"/>
    <property type="match status" value="1"/>
</dbReference>
<dbReference type="FunFam" id="3.10.20.90:FF:000459">
    <property type="entry name" value="F15C11.2"/>
    <property type="match status" value="1"/>
</dbReference>
<dbReference type="FunFam" id="1.10.260.100:FF:000001">
    <property type="entry name" value="Ubiquilin 1"/>
    <property type="match status" value="1"/>
</dbReference>
<dbReference type="FunFam" id="1.10.8.10:FF:000079">
    <property type="entry name" value="Ubiquitin family protein"/>
    <property type="match status" value="1"/>
</dbReference>
<dbReference type="Gene3D" id="1.10.260.100">
    <property type="match status" value="2"/>
</dbReference>
<dbReference type="Gene3D" id="1.10.8.10">
    <property type="entry name" value="DNA helicase RuvA subunit, C-terminal domain"/>
    <property type="match status" value="1"/>
</dbReference>
<dbReference type="Gene3D" id="3.10.20.90">
    <property type="entry name" value="Phosphatidylinositol 3-kinase Catalytic Subunit, Chain A, domain 1"/>
    <property type="match status" value="1"/>
</dbReference>
<dbReference type="InterPro" id="IPR006636">
    <property type="entry name" value="STI1_HS-bd"/>
</dbReference>
<dbReference type="InterPro" id="IPR015940">
    <property type="entry name" value="UBA"/>
</dbReference>
<dbReference type="InterPro" id="IPR009060">
    <property type="entry name" value="UBA-like_sf"/>
</dbReference>
<dbReference type="InterPro" id="IPR015496">
    <property type="entry name" value="Ubiquilin"/>
</dbReference>
<dbReference type="InterPro" id="IPR000626">
    <property type="entry name" value="Ubiquitin-like_dom"/>
</dbReference>
<dbReference type="InterPro" id="IPR029071">
    <property type="entry name" value="Ubiquitin-like_domsf"/>
</dbReference>
<dbReference type="InterPro" id="IPR036353">
    <property type="entry name" value="XPC-bd_sf"/>
</dbReference>
<dbReference type="PANTHER" id="PTHR10677:SF3">
    <property type="entry name" value="FI07626P-RELATED"/>
    <property type="match status" value="1"/>
</dbReference>
<dbReference type="PANTHER" id="PTHR10677">
    <property type="entry name" value="UBIQUILIN"/>
    <property type="match status" value="1"/>
</dbReference>
<dbReference type="Pfam" id="PF00627">
    <property type="entry name" value="UBA"/>
    <property type="match status" value="1"/>
</dbReference>
<dbReference type="Pfam" id="PF00240">
    <property type="entry name" value="ubiquitin"/>
    <property type="match status" value="1"/>
</dbReference>
<dbReference type="Pfam" id="PF23195">
    <property type="entry name" value="UBQLN1"/>
    <property type="match status" value="1"/>
</dbReference>
<dbReference type="SMART" id="SM00727">
    <property type="entry name" value="STI1"/>
    <property type="match status" value="4"/>
</dbReference>
<dbReference type="SMART" id="SM00165">
    <property type="entry name" value="UBA"/>
    <property type="match status" value="1"/>
</dbReference>
<dbReference type="SMART" id="SM00213">
    <property type="entry name" value="UBQ"/>
    <property type="match status" value="1"/>
</dbReference>
<dbReference type="SUPFAM" id="SSF46934">
    <property type="entry name" value="UBA-like"/>
    <property type="match status" value="1"/>
</dbReference>
<dbReference type="SUPFAM" id="SSF54236">
    <property type="entry name" value="Ubiquitin-like"/>
    <property type="match status" value="1"/>
</dbReference>
<dbReference type="SUPFAM" id="SSF101238">
    <property type="entry name" value="XPC-binding domain"/>
    <property type="match status" value="1"/>
</dbReference>
<dbReference type="PROSITE" id="PS50030">
    <property type="entry name" value="UBA"/>
    <property type="match status" value="1"/>
</dbReference>
<dbReference type="PROSITE" id="PS50053">
    <property type="entry name" value="UBIQUITIN_2"/>
    <property type="match status" value="1"/>
</dbReference>
<organism evidence="10">
    <name type="scientific">Caenorhabditis elegans</name>
    <dbReference type="NCBI Taxonomy" id="6239"/>
    <lineage>
        <taxon>Eukaryota</taxon>
        <taxon>Metazoa</taxon>
        <taxon>Ecdysozoa</taxon>
        <taxon>Nematoda</taxon>
        <taxon>Chromadorea</taxon>
        <taxon>Rhabditida</taxon>
        <taxon>Rhabditina</taxon>
        <taxon>Rhabditomorpha</taxon>
        <taxon>Rhabditoidea</taxon>
        <taxon>Rhabditidae</taxon>
        <taxon>Peloderinae</taxon>
        <taxon>Caenorhabditis</taxon>
    </lineage>
</organism>
<reference evidence="10" key="1">
    <citation type="journal article" date="1998" name="Science">
        <title>Genome sequence of the nematode C. elegans: a platform for investigating biology.</title>
        <authorList>
            <consortium name="The C. elegans sequencing consortium"/>
        </authorList>
    </citation>
    <scope>NUCLEOTIDE SEQUENCE [LARGE SCALE GENOMIC DNA]</scope>
    <source>
        <strain evidence="10">Bristol N2</strain>
    </source>
</reference>
<reference evidence="9" key="2">
    <citation type="journal article" date="2009" name="J. Cell Biol.">
        <title>Ubiquilin and p97/VCP bind erasin, forming a complex involved in ERAD.</title>
        <authorList>
            <person name="Lim P.J."/>
            <person name="Danner R."/>
            <person name="Liang J."/>
            <person name="Doong H."/>
            <person name="Harman C."/>
            <person name="Srinivasan D."/>
            <person name="Rothenberg C."/>
            <person name="Wang H."/>
            <person name="Ye Y."/>
            <person name="Fang S."/>
            <person name="Monteiro M.J."/>
        </authorList>
    </citation>
    <scope>FUNCTION</scope>
    <scope>INDUCTION</scope>
    <scope>TISSUE SPECIFICITY</scope>
    <scope>DISRUPTION PHENOTYPE</scope>
</reference>
<reference key="3">
    <citation type="journal article" date="2018" name="Proc. Natl. Acad. Sci. U.S.A.">
        <title>Nuclear export of ubiquitinated proteins via the UBIN-POST system.</title>
        <authorList>
            <person name="Hirayama S."/>
            <person name="Sugihara M."/>
            <person name="Morito D."/>
            <person name="Iemura S.I."/>
            <person name="Natsume T."/>
            <person name="Murata S."/>
            <person name="Nagata K."/>
        </authorList>
    </citation>
    <scope>FUNCTION</scope>
    <scope>TISSUE SPECIFICITY</scope>
    <scope>DISRUPTION PHENOTYPE</scope>
</reference>
<reference key="4">
    <citation type="journal article" date="2019" name="Cell">
        <title>UBQLN4 represses homologous recombination and is overexpressed in aggressive tumors.</title>
        <authorList>
            <person name="Jachimowicz R.D."/>
            <person name="Beleggia F."/>
            <person name="Isensee J."/>
            <person name="Velpula B.B."/>
            <person name="Goergens J."/>
            <person name="Bustos M.A."/>
            <person name="Doll M.A."/>
            <person name="Shenoy A."/>
            <person name="Checa-Rodriguez C."/>
            <person name="Wiederstein J.L."/>
            <person name="Baranes-Bachar K."/>
            <person name="Bartenhagen C."/>
            <person name="Hertwig F."/>
            <person name="Teper N."/>
            <person name="Nishi T."/>
            <person name="Schmitt A."/>
            <person name="Distelmaier F."/>
            <person name="Luedecke H.J."/>
            <person name="Albrecht B."/>
            <person name="Krueger M."/>
            <person name="Schumacher B."/>
            <person name="Geiger T."/>
            <person name="Hoon D.S.B."/>
            <person name="Huertas P."/>
            <person name="Fischer M."/>
            <person name="Hucho T."/>
            <person name="Peifer M."/>
            <person name="Ziv Y."/>
            <person name="Reinhardt H.C."/>
            <person name="Wieczorek D."/>
            <person name="Shiloh Y."/>
        </authorList>
    </citation>
    <scope>FUNCTION</scope>
    <scope>DISRUPTION PHENOTYPE</scope>
</reference>
<evidence type="ECO:0000250" key="1">
    <source>
        <dbReference type="UniProtKB" id="Q9UMX0"/>
    </source>
</evidence>
<evidence type="ECO:0000255" key="2"/>
<evidence type="ECO:0000255" key="3">
    <source>
        <dbReference type="PROSITE-ProRule" id="PRU00212"/>
    </source>
</evidence>
<evidence type="ECO:0000255" key="4">
    <source>
        <dbReference type="PROSITE-ProRule" id="PRU00214"/>
    </source>
</evidence>
<evidence type="ECO:0000256" key="5">
    <source>
        <dbReference type="SAM" id="MobiDB-lite"/>
    </source>
</evidence>
<evidence type="ECO:0000269" key="6">
    <source>
    </source>
</evidence>
<evidence type="ECO:0000269" key="7">
    <source>
    </source>
</evidence>
<evidence type="ECO:0000269" key="8">
    <source>
    </source>
</evidence>
<evidence type="ECO:0000305" key="9"/>
<evidence type="ECO:0000312" key="10">
    <source>
        <dbReference type="Proteomes" id="UP000001940"/>
    </source>
</evidence>
<evidence type="ECO:0000312" key="11">
    <source>
        <dbReference type="WormBase" id="F15C11.2a"/>
    </source>
</evidence>
<evidence type="ECO:0000312" key="12">
    <source>
        <dbReference type="WormBase" id="F15C11.2b"/>
    </source>
</evidence>
<evidence type="ECO:0000312" key="13">
    <source>
        <dbReference type="WormBase" id="F15C11.2c"/>
    </source>
</evidence>
<sequence length="502" mass="54086">MATESALIKVHVKSPSNKYDVEIAADASVSELKDKVLVFVPTANKEQVCIIYTGKILKDEETLTQHKIADGHTVHLVIRNQARPTPAPAAATPTASSAPSSNPTPSSQPNPTNNPFAAMGGMGSPADILNNPDAMRSVMDNPITQQLLGNPEFMRTIIQSNPQFQALIERNPEVGHILNDPNVMRQTMEMIRNPNMFQEMMRNHDQAIRNLQGIPGGEAALERLYNDVQEPLLNSATNSLSGNPFASLRGDQSSEPRVDRAGQENNEALPNPWASNANQATNNQSNNRSADFNSLLDSPGISSLMEQMMSNPSMQASMFSPEVINSIRQNMSNNPGLIDSIVGQIPSARDNPQISEGIRRSFPQMLNMMSDPSVMEAMRNPRVSEAFRQIQEGFSTLRREAPQLLNLFQAGAMGGGAFGSDANASSAGANSANGLADLFNSMNMGGGRPSSTAAPVNPEQTYASQLEQLQSMGFSDRARNVAALTATFGDLNAAVERLLNSP</sequence>
<protein>
    <recommendedName>
        <fullName evidence="11">Ubiquilin</fullName>
    </recommendedName>
</protein>
<name>UBQL_CAEEL</name>